<name>DDX53_HUMAN</name>
<protein>
    <recommendedName>
        <fullName>Probable ATP-dependent RNA helicase DDX53</fullName>
        <ecNumber>3.6.4.13</ecNumber>
    </recommendedName>
    <alternativeName>
        <fullName>Cancer-associated gene protein</fullName>
    </alternativeName>
    <alternativeName>
        <fullName>Cancer/testis antigen 26</fullName>
        <shortName>CT26</shortName>
    </alternativeName>
    <alternativeName>
        <fullName>DEAD box protein 53</fullName>
    </alternativeName>
    <alternativeName>
        <fullName>DEAD box protein CAGE</fullName>
    </alternativeName>
</protein>
<evidence type="ECO:0000255" key="1">
    <source>
        <dbReference type="PROSITE-ProRule" id="PRU00117"/>
    </source>
</evidence>
<evidence type="ECO:0000255" key="2">
    <source>
        <dbReference type="PROSITE-ProRule" id="PRU00541"/>
    </source>
</evidence>
<evidence type="ECO:0000255" key="3">
    <source>
        <dbReference type="PROSITE-ProRule" id="PRU00542"/>
    </source>
</evidence>
<evidence type="ECO:0000269" key="4">
    <source>
    </source>
</evidence>
<evidence type="ECO:0000269" key="5">
    <source>
    </source>
</evidence>
<evidence type="ECO:0000305" key="6"/>
<evidence type="ECO:0007829" key="7">
    <source>
        <dbReference type="PDB" id="3IUY"/>
    </source>
</evidence>
<evidence type="ECO:0007829" key="8">
    <source>
        <dbReference type="PDB" id="8KCA"/>
    </source>
</evidence>
<dbReference type="EC" id="3.6.4.13"/>
<dbReference type="EMBL" id="AY039237">
    <property type="protein sequence ID" value="AAK72102.1"/>
    <property type="molecule type" value="mRNA"/>
</dbReference>
<dbReference type="EMBL" id="BC051703">
    <property type="protein sequence ID" value="AAH51703.1"/>
    <property type="molecule type" value="mRNA"/>
</dbReference>
<dbReference type="EMBL" id="BC067878">
    <property type="protein sequence ID" value="AAH67878.1"/>
    <property type="molecule type" value="mRNA"/>
</dbReference>
<dbReference type="CCDS" id="CCDS35214.1"/>
<dbReference type="PIR" id="JC7831">
    <property type="entry name" value="JC7831"/>
</dbReference>
<dbReference type="RefSeq" id="NP_874358.2">
    <property type="nucleotide sequence ID" value="NM_182699.4"/>
</dbReference>
<dbReference type="PDB" id="3IUY">
    <property type="method" value="X-ray"/>
    <property type="resolution" value="2.40 A"/>
    <property type="chains" value="A/B=204-430"/>
</dbReference>
<dbReference type="PDB" id="8KCA">
    <property type="method" value="X-ray"/>
    <property type="resolution" value="1.97 A"/>
    <property type="chains" value="A/B=440-631"/>
</dbReference>
<dbReference type="PDBsum" id="3IUY"/>
<dbReference type="PDBsum" id="8KCA"/>
<dbReference type="SMR" id="Q86TM3"/>
<dbReference type="BioGRID" id="127960">
    <property type="interactions" value="6"/>
</dbReference>
<dbReference type="FunCoup" id="Q86TM3">
    <property type="interactions" value="248"/>
</dbReference>
<dbReference type="IntAct" id="Q86TM3">
    <property type="interactions" value="1"/>
</dbReference>
<dbReference type="STRING" id="9606.ENSP00000368667"/>
<dbReference type="GlyGen" id="Q86TM3">
    <property type="glycosylation" value="1 site, 1 O-linked glycan (1 site)"/>
</dbReference>
<dbReference type="iPTMnet" id="Q86TM3"/>
<dbReference type="PhosphoSitePlus" id="Q86TM3"/>
<dbReference type="BioMuta" id="DDX53"/>
<dbReference type="DMDM" id="143811384"/>
<dbReference type="jPOST" id="Q86TM3"/>
<dbReference type="MassIVE" id="Q86TM3"/>
<dbReference type="PaxDb" id="9606-ENSP00000368667"/>
<dbReference type="PeptideAtlas" id="Q86TM3"/>
<dbReference type="ProteomicsDB" id="69712"/>
<dbReference type="Pumba" id="Q86TM3"/>
<dbReference type="Antibodypedia" id="563">
    <property type="antibodies" value="148 antibodies from 24 providers"/>
</dbReference>
<dbReference type="DNASU" id="168400"/>
<dbReference type="Ensembl" id="ENST00000327968.7">
    <property type="protein sequence ID" value="ENSP00000368667.2"/>
    <property type="gene ID" value="ENSG00000184735.7"/>
</dbReference>
<dbReference type="GeneID" id="168400"/>
<dbReference type="KEGG" id="hsa:168400"/>
<dbReference type="MANE-Select" id="ENST00000327968.7">
    <property type="protein sequence ID" value="ENSP00000368667.2"/>
    <property type="RefSeq nucleotide sequence ID" value="NM_182699.4"/>
    <property type="RefSeq protein sequence ID" value="NP_874358.2"/>
</dbReference>
<dbReference type="UCSC" id="uc004daj.4">
    <property type="organism name" value="human"/>
</dbReference>
<dbReference type="AGR" id="HGNC:20083"/>
<dbReference type="CTD" id="168400"/>
<dbReference type="DisGeNET" id="168400"/>
<dbReference type="GeneCards" id="DDX53"/>
<dbReference type="HGNC" id="HGNC:20083">
    <property type="gene designation" value="DDX53"/>
</dbReference>
<dbReference type="HPA" id="ENSG00000184735">
    <property type="expression patterns" value="Tissue enriched (testis)"/>
</dbReference>
<dbReference type="MalaCards" id="DDX53"/>
<dbReference type="MIM" id="301079">
    <property type="type" value="gene"/>
</dbReference>
<dbReference type="neXtProt" id="NX_Q86TM3"/>
<dbReference type="OpenTargets" id="ENSG00000184735"/>
<dbReference type="PharmGKB" id="PA134863598"/>
<dbReference type="VEuPathDB" id="HostDB:ENSG00000184735"/>
<dbReference type="eggNOG" id="KOG0336">
    <property type="taxonomic scope" value="Eukaryota"/>
</dbReference>
<dbReference type="GeneTree" id="ENSGT00940000167221"/>
<dbReference type="HOGENOM" id="CLU_003041_16_8_1"/>
<dbReference type="InParanoid" id="Q86TM3"/>
<dbReference type="OMA" id="AFQQYPD"/>
<dbReference type="OrthoDB" id="196131at2759"/>
<dbReference type="PAN-GO" id="Q86TM3">
    <property type="GO annotations" value="2 GO annotations based on evolutionary models"/>
</dbReference>
<dbReference type="PhylomeDB" id="Q86TM3"/>
<dbReference type="TreeFam" id="TF312949"/>
<dbReference type="PathwayCommons" id="Q86TM3"/>
<dbReference type="SignaLink" id="Q86TM3"/>
<dbReference type="BioGRID-ORCS" id="168400">
    <property type="hits" value="26 hits in 771 CRISPR screens"/>
</dbReference>
<dbReference type="CD-CODE" id="91857CE7">
    <property type="entry name" value="Nucleolus"/>
</dbReference>
<dbReference type="EvolutionaryTrace" id="Q86TM3"/>
<dbReference type="GenomeRNAi" id="168400"/>
<dbReference type="Pharos" id="Q86TM3">
    <property type="development level" value="Tbio"/>
</dbReference>
<dbReference type="PRO" id="PR:Q86TM3"/>
<dbReference type="Proteomes" id="UP000005640">
    <property type="component" value="Chromosome X"/>
</dbReference>
<dbReference type="RNAct" id="Q86TM3">
    <property type="molecule type" value="protein"/>
</dbReference>
<dbReference type="Bgee" id="ENSG00000184735">
    <property type="expression patterns" value="Expressed in primordial germ cell in gonad and 14 other cell types or tissues"/>
</dbReference>
<dbReference type="GO" id="GO:0005829">
    <property type="term" value="C:cytosol"/>
    <property type="evidence" value="ECO:0000314"/>
    <property type="project" value="HPA"/>
</dbReference>
<dbReference type="GO" id="GO:0043231">
    <property type="term" value="C:intracellular membrane-bounded organelle"/>
    <property type="evidence" value="ECO:0000314"/>
    <property type="project" value="HPA"/>
</dbReference>
<dbReference type="GO" id="GO:0005730">
    <property type="term" value="C:nucleolus"/>
    <property type="evidence" value="ECO:0000314"/>
    <property type="project" value="HPA"/>
</dbReference>
<dbReference type="GO" id="GO:0005654">
    <property type="term" value="C:nucleoplasm"/>
    <property type="evidence" value="ECO:0000314"/>
    <property type="project" value="HPA"/>
</dbReference>
<dbReference type="GO" id="GO:0005524">
    <property type="term" value="F:ATP binding"/>
    <property type="evidence" value="ECO:0007669"/>
    <property type="project" value="UniProtKB-KW"/>
</dbReference>
<dbReference type="GO" id="GO:0016887">
    <property type="term" value="F:ATP hydrolysis activity"/>
    <property type="evidence" value="ECO:0007669"/>
    <property type="project" value="RHEA"/>
</dbReference>
<dbReference type="GO" id="GO:0003729">
    <property type="term" value="F:mRNA binding"/>
    <property type="evidence" value="ECO:0000318"/>
    <property type="project" value="GO_Central"/>
</dbReference>
<dbReference type="GO" id="GO:0003724">
    <property type="term" value="F:RNA helicase activity"/>
    <property type="evidence" value="ECO:0000318"/>
    <property type="project" value="GO_Central"/>
</dbReference>
<dbReference type="CDD" id="cd17958">
    <property type="entry name" value="DEADc_DDX43_DDX53"/>
    <property type="match status" value="1"/>
</dbReference>
<dbReference type="CDD" id="cd22430">
    <property type="entry name" value="KH-I_DDX43_DDX53"/>
    <property type="match status" value="1"/>
</dbReference>
<dbReference type="CDD" id="cd18787">
    <property type="entry name" value="SF2_C_DEAD"/>
    <property type="match status" value="1"/>
</dbReference>
<dbReference type="FunFam" id="3.30.1370.10:FF:000083">
    <property type="entry name" value="DEAD (Asp-Glu-Ala-Asp) box polypeptide 43"/>
    <property type="match status" value="1"/>
</dbReference>
<dbReference type="FunFam" id="3.40.50.300:FF:000079">
    <property type="entry name" value="probable ATP-dependent RNA helicase DDX17"/>
    <property type="match status" value="1"/>
</dbReference>
<dbReference type="Gene3D" id="3.30.1370.10">
    <property type="entry name" value="K Homology domain, type 1"/>
    <property type="match status" value="1"/>
</dbReference>
<dbReference type="Gene3D" id="3.40.50.300">
    <property type="entry name" value="P-loop containing nucleotide triphosphate hydrolases"/>
    <property type="match status" value="2"/>
</dbReference>
<dbReference type="InterPro" id="IPR011545">
    <property type="entry name" value="DEAD/DEAH_box_helicase_dom"/>
</dbReference>
<dbReference type="InterPro" id="IPR014001">
    <property type="entry name" value="Helicase_ATP-bd"/>
</dbReference>
<dbReference type="InterPro" id="IPR001650">
    <property type="entry name" value="Helicase_C-like"/>
</dbReference>
<dbReference type="InterPro" id="IPR004087">
    <property type="entry name" value="KH_dom"/>
</dbReference>
<dbReference type="InterPro" id="IPR004088">
    <property type="entry name" value="KH_dom_type_1"/>
</dbReference>
<dbReference type="InterPro" id="IPR036612">
    <property type="entry name" value="KH_dom_type_1_sf"/>
</dbReference>
<dbReference type="InterPro" id="IPR027417">
    <property type="entry name" value="P-loop_NTPase"/>
</dbReference>
<dbReference type="InterPro" id="IPR000629">
    <property type="entry name" value="RNA-helicase_DEAD-box_CS"/>
</dbReference>
<dbReference type="PANTHER" id="PTHR47958">
    <property type="entry name" value="ATP-DEPENDENT RNA HELICASE DBP3"/>
    <property type="match status" value="1"/>
</dbReference>
<dbReference type="Pfam" id="PF00270">
    <property type="entry name" value="DEAD"/>
    <property type="match status" value="1"/>
</dbReference>
<dbReference type="Pfam" id="PF00271">
    <property type="entry name" value="Helicase_C"/>
    <property type="match status" value="1"/>
</dbReference>
<dbReference type="Pfam" id="PF00013">
    <property type="entry name" value="KH_1"/>
    <property type="match status" value="1"/>
</dbReference>
<dbReference type="SMART" id="SM00487">
    <property type="entry name" value="DEXDc"/>
    <property type="match status" value="1"/>
</dbReference>
<dbReference type="SMART" id="SM00490">
    <property type="entry name" value="HELICc"/>
    <property type="match status" value="1"/>
</dbReference>
<dbReference type="SMART" id="SM00322">
    <property type="entry name" value="KH"/>
    <property type="match status" value="1"/>
</dbReference>
<dbReference type="SUPFAM" id="SSF54791">
    <property type="entry name" value="Eukaryotic type KH-domain (KH-domain type I)"/>
    <property type="match status" value="1"/>
</dbReference>
<dbReference type="SUPFAM" id="SSF52540">
    <property type="entry name" value="P-loop containing nucleoside triphosphate hydrolases"/>
    <property type="match status" value="1"/>
</dbReference>
<dbReference type="PROSITE" id="PS00039">
    <property type="entry name" value="DEAD_ATP_HELICASE"/>
    <property type="match status" value="1"/>
</dbReference>
<dbReference type="PROSITE" id="PS51192">
    <property type="entry name" value="HELICASE_ATP_BIND_1"/>
    <property type="match status" value="1"/>
</dbReference>
<dbReference type="PROSITE" id="PS51194">
    <property type="entry name" value="HELICASE_CTER"/>
    <property type="match status" value="1"/>
</dbReference>
<dbReference type="PROSITE" id="PS50084">
    <property type="entry name" value="KH_TYPE_1"/>
    <property type="match status" value="1"/>
</dbReference>
<dbReference type="PROSITE" id="PS51195">
    <property type="entry name" value="Q_MOTIF"/>
    <property type="match status" value="1"/>
</dbReference>
<reference key="1">
    <citation type="journal article" date="2002" name="Biochem. Biophys. Res. Commun.">
        <title>Identification and characterization of a novel cancer/testis antigen gene CAGE.</title>
        <authorList>
            <person name="Cho B."/>
            <person name="Lim Y."/>
            <person name="Lee D.Y."/>
            <person name="Park S.Y."/>
            <person name="Lee H."/>
            <person name="Kim W.H."/>
            <person name="Yang H."/>
            <person name="Bang Y.J."/>
            <person name="Jeoung D.I."/>
        </authorList>
    </citation>
    <scope>NUCLEOTIDE SEQUENCE [MRNA]</scope>
    <scope>SUBCELLULAR LOCATION</scope>
    <scope>TISSUE SPECIFICITY</scope>
    <source>
        <tissue>Testis</tissue>
    </source>
</reference>
<reference key="2">
    <citation type="journal article" date="2004" name="Genome Res.">
        <title>The status, quality, and expansion of the NIH full-length cDNA project: the Mammalian Gene Collection (MGC).</title>
        <authorList>
            <consortium name="The MGC Project Team"/>
        </authorList>
    </citation>
    <scope>NUCLEOTIDE SEQUENCE [LARGE SCALE MRNA]</scope>
    <source>
        <tissue>Testis</tissue>
    </source>
</reference>
<reference key="3">
    <citation type="journal article" date="2010" name="PLoS ONE">
        <title>Comparative structural analysis of human DEAD-box RNA helicases.</title>
        <authorList>
            <person name="Schutz P."/>
            <person name="Karlberg T."/>
            <person name="van den Berg S."/>
            <person name="Collins R."/>
            <person name="Lehtio L."/>
            <person name="Hogbom M."/>
            <person name="Holmberg-Schiavone L."/>
            <person name="Tempel W."/>
            <person name="Park H.W."/>
            <person name="Hammarstrom M."/>
            <person name="Moche M."/>
            <person name="Thorsell A.G."/>
            <person name="Schuler H."/>
        </authorList>
    </citation>
    <scope>X-RAY CRYSTALLOGRAPHY (2.4 ANGSTROMS) OF 204-430 IN COMPLEX WITH AMP</scope>
</reference>
<reference key="4">
    <citation type="journal article" date="2011" name="Nature">
        <title>Exome sequencing identifies frequent mutation of the SWI/SNF complex gene PBRM1 in renal carcinoma.</title>
        <authorList>
            <person name="Varela I."/>
            <person name="Tarpey P."/>
            <person name="Raine K."/>
            <person name="Huang D."/>
            <person name="Ong C.K."/>
            <person name="Stephens P."/>
            <person name="Davies H."/>
            <person name="Jones D."/>
            <person name="Lin M.L."/>
            <person name="Teague J."/>
            <person name="Bignell G."/>
            <person name="Butler A."/>
            <person name="Cho J."/>
            <person name="Dalgliesh G.L."/>
            <person name="Galappaththige D."/>
            <person name="Greenman C."/>
            <person name="Hardy C."/>
            <person name="Jia M."/>
            <person name="Latimer C."/>
            <person name="Lau K.W."/>
            <person name="Marshall J."/>
            <person name="McLaren S."/>
            <person name="Menzies A."/>
            <person name="Mudie L."/>
            <person name="Stebbings L."/>
            <person name="Largaespada D.A."/>
            <person name="Wessels L.F.A."/>
            <person name="Richard S."/>
            <person name="Kahnoski R.J."/>
            <person name="Anema J."/>
            <person name="Tuveson D.A."/>
            <person name="Perez-Mancera P.A."/>
            <person name="Mustonen V."/>
            <person name="Fischer A."/>
            <person name="Adams D.J."/>
            <person name="Rust A."/>
            <person name="Chan-On W."/>
            <person name="Subimerb C."/>
            <person name="Dykema K."/>
            <person name="Furge K."/>
            <person name="Campbell P.J."/>
            <person name="Teh B.T."/>
            <person name="Stratton M.R."/>
            <person name="Futreal P.A."/>
        </authorList>
    </citation>
    <scope>VARIANT THR-141</scope>
</reference>
<proteinExistence type="evidence at protein level"/>
<gene>
    <name type="primary">DDX53</name>
    <name type="synonym">CAGE</name>
</gene>
<sequence length="631" mass="71154">MSHWAPEWKRAEANPRDLGASWDVRGSRGSGWSGPFGHQGPRAAGSREPPLCFKIKNNMVGVVIGYSGSKIKDLQHSTNTKIQIINGESEAKVRIFGNREMKAKAKAAIETLIRKQESYNSESSVDNAASQTPIGRNLGRNDIVGEAEPLSNWDRIRAAVVECEKRKWADLPPVKKNFYIESKATSCMSEMQVINWRKENFNITCDDLKSGEKRLIPKPTCRFKDAFQQYPDLLKSIIRVGIVKPTPIQSQAWPIILQGIDLIVVAQTGTGKTLSYLMPGFIHLDSQPISREQRNGPGMLVLTPTRELALHVEAECSKYSYKGLKSICIYGGRNRNGQIEDISKGVDIIIATPGRLNDLQMNNSVNLRSITYLVIDEADKMLDMEFEPQIRKILLDVRPDRQTVMTSATWPDTVRQLALSYLKDPMIVYVGNLNLVAVNTVKQNIIVTTEKEKRALTQEFVENMSPNDKVIMFVSQKHIADDLSSDFNIQGISAESLHGNSEQSDQERAVEDFKSGNIKILITTDIVSRGLDLNDVTHVYNYDFPRNIDVYVHRVGYIGRTGKTGTSVTLITQRDSKMAGELIKILDRANQSVPEDLVVMAEQYKLNQQKRHRETRSRKPGQRRKEFYFLS</sequence>
<feature type="chain" id="PRO_0000054973" description="Probable ATP-dependent RNA helicase DDX53">
    <location>
        <begin position="1"/>
        <end position="631"/>
    </location>
</feature>
<feature type="domain" description="KH" evidence="1">
    <location>
        <begin position="48"/>
        <end position="109"/>
    </location>
</feature>
<feature type="domain" description="Helicase ATP-binding" evidence="2">
    <location>
        <begin position="253"/>
        <end position="428"/>
    </location>
</feature>
<feature type="domain" description="Helicase C-terminal" evidence="3">
    <location>
        <begin position="440"/>
        <end position="601"/>
    </location>
</feature>
<feature type="short sequence motif" description="Q motif">
    <location>
        <begin position="222"/>
        <end position="250"/>
    </location>
</feature>
<feature type="short sequence motif" description="DEAD box">
    <location>
        <begin position="376"/>
        <end position="379"/>
    </location>
</feature>
<feature type="binding site">
    <location>
        <position position="244"/>
    </location>
    <ligand>
        <name>ATP</name>
        <dbReference type="ChEBI" id="CHEBI:30616"/>
    </ligand>
</feature>
<feature type="binding site">
    <location>
        <position position="249"/>
    </location>
    <ligand>
        <name>ATP</name>
        <dbReference type="ChEBI" id="CHEBI:30616"/>
    </ligand>
</feature>
<feature type="binding site">
    <location>
        <begin position="268"/>
        <end position="273"/>
    </location>
    <ligand>
        <name>ATP</name>
        <dbReference type="ChEBI" id="CHEBI:30616"/>
    </ligand>
</feature>
<feature type="binding site">
    <location>
        <position position="311"/>
    </location>
    <ligand>
        <name>ATP</name>
        <dbReference type="ChEBI" id="CHEBI:30616"/>
    </ligand>
</feature>
<feature type="sequence variant" id="VAR_052168" description="In dbSNP:rs4412516.">
    <original>V</original>
    <variation>A</variation>
    <location>
        <position position="62"/>
    </location>
</feature>
<feature type="sequence variant" id="VAR_064707" description="Found in a renal cell carcinoma case; somatic mutation." evidence="5">
    <original>N</original>
    <variation>T</variation>
    <location>
        <position position="141"/>
    </location>
</feature>
<feature type="sequence variant" id="VAR_052169" description="In dbSNP:rs5925720.">
    <original>M</original>
    <variation>I</variation>
    <location>
        <position position="381"/>
    </location>
</feature>
<feature type="sequence variant" id="VAR_052170" description="In dbSNP:rs5926203.">
    <original>R</original>
    <variation>M</variation>
    <location>
        <position position="391"/>
    </location>
</feature>
<feature type="sequence conflict" description="In Ref. 2; AAH67878." evidence="6" ref="2">
    <original>V</original>
    <variation>L</variation>
    <location>
        <position position="243"/>
    </location>
</feature>
<feature type="sequence conflict" description="In Ref. 1; AAK72102." evidence="6" ref="1">
    <original>YIGRTGKTGTSVT</original>
    <variation>SLDGQERLHISS</variation>
    <location>
        <begin position="557"/>
        <end position="569"/>
    </location>
</feature>
<feature type="sequence conflict" description="In Ref. 2; AAH67878." evidence="6" ref="2">
    <original>K</original>
    <variation>E</variation>
    <location>
        <position position="619"/>
    </location>
</feature>
<feature type="sequence conflict" description="In Ref. 2; AAH51703." evidence="6" ref="2">
    <original>Q</original>
    <variation>R</variation>
    <location>
        <position position="622"/>
    </location>
</feature>
<feature type="strand" evidence="7">
    <location>
        <begin position="204"/>
        <end position="207"/>
    </location>
</feature>
<feature type="strand" evidence="7">
    <location>
        <begin position="210"/>
        <end position="212"/>
    </location>
</feature>
<feature type="helix" evidence="7">
    <location>
        <begin position="223"/>
        <end position="227"/>
    </location>
</feature>
<feature type="helix" evidence="7">
    <location>
        <begin position="231"/>
        <end position="240"/>
    </location>
</feature>
<feature type="helix" evidence="7">
    <location>
        <begin position="247"/>
        <end position="257"/>
    </location>
</feature>
<feature type="strand" evidence="7">
    <location>
        <begin position="262"/>
        <end position="265"/>
    </location>
</feature>
<feature type="helix" evidence="7">
    <location>
        <begin position="272"/>
        <end position="284"/>
    </location>
</feature>
<feature type="strand" evidence="7">
    <location>
        <begin position="298"/>
        <end position="302"/>
    </location>
</feature>
<feature type="helix" evidence="7">
    <location>
        <begin position="306"/>
        <end position="319"/>
    </location>
</feature>
<feature type="strand" evidence="7">
    <location>
        <begin position="326"/>
        <end position="329"/>
    </location>
</feature>
<feature type="helix" evidence="7">
    <location>
        <begin position="339"/>
        <end position="343"/>
    </location>
</feature>
<feature type="strand" evidence="7">
    <location>
        <begin position="347"/>
        <end position="351"/>
    </location>
</feature>
<feature type="helix" evidence="7">
    <location>
        <begin position="353"/>
        <end position="361"/>
    </location>
</feature>
<feature type="strand" evidence="7">
    <location>
        <begin position="372"/>
        <end position="375"/>
    </location>
</feature>
<feature type="helix" evidence="7">
    <location>
        <begin position="378"/>
        <end position="383"/>
    </location>
</feature>
<feature type="helix" evidence="7">
    <location>
        <begin position="387"/>
        <end position="396"/>
    </location>
</feature>
<feature type="strand" evidence="7">
    <location>
        <begin position="402"/>
        <end position="408"/>
    </location>
</feature>
<feature type="helix" evidence="7">
    <location>
        <begin position="412"/>
        <end position="419"/>
    </location>
</feature>
<feature type="strand" evidence="7">
    <location>
        <begin position="426"/>
        <end position="429"/>
    </location>
</feature>
<feature type="strand" evidence="8">
    <location>
        <begin position="441"/>
        <end position="447"/>
    </location>
</feature>
<feature type="helix" evidence="8">
    <location>
        <begin position="450"/>
        <end position="452"/>
    </location>
</feature>
<feature type="helix" evidence="8">
    <location>
        <begin position="453"/>
        <end position="462"/>
    </location>
</feature>
<feature type="strand" evidence="8">
    <location>
        <begin position="470"/>
        <end position="473"/>
    </location>
</feature>
<feature type="helix" evidence="8">
    <location>
        <begin position="477"/>
        <end position="490"/>
    </location>
</feature>
<feature type="strand" evidence="8">
    <location>
        <begin position="494"/>
        <end position="497"/>
    </location>
</feature>
<feature type="helix" evidence="8">
    <location>
        <begin position="503"/>
        <end position="514"/>
    </location>
</feature>
<feature type="strand" evidence="8">
    <location>
        <begin position="519"/>
        <end position="526"/>
    </location>
</feature>
<feature type="helix" evidence="8">
    <location>
        <begin position="533"/>
        <end position="535"/>
    </location>
</feature>
<feature type="strand" evidence="8">
    <location>
        <begin position="538"/>
        <end position="543"/>
    </location>
</feature>
<feature type="helix" evidence="8">
    <location>
        <begin position="548"/>
        <end position="559"/>
    </location>
</feature>
<feature type="turn" evidence="8">
    <location>
        <begin position="560"/>
        <end position="562"/>
    </location>
</feature>
<feature type="strand" evidence="8">
    <location>
        <begin position="565"/>
        <end position="571"/>
    </location>
</feature>
<feature type="helix" evidence="8">
    <location>
        <begin position="573"/>
        <end position="578"/>
    </location>
</feature>
<feature type="helix" evidence="8">
    <location>
        <begin position="579"/>
        <end position="588"/>
    </location>
</feature>
<feature type="helix" evidence="8">
    <location>
        <begin position="595"/>
        <end position="609"/>
    </location>
</feature>
<accession>Q86TM3</accession>
<accession>Q0D2N2</accession>
<accession>Q6NVV4</accession>
<comment type="catalytic activity">
    <reaction>
        <text>ATP + H2O = ADP + phosphate + H(+)</text>
        <dbReference type="Rhea" id="RHEA:13065"/>
        <dbReference type="ChEBI" id="CHEBI:15377"/>
        <dbReference type="ChEBI" id="CHEBI:15378"/>
        <dbReference type="ChEBI" id="CHEBI:30616"/>
        <dbReference type="ChEBI" id="CHEBI:43474"/>
        <dbReference type="ChEBI" id="CHEBI:456216"/>
        <dbReference type="EC" id="3.6.4.13"/>
    </reaction>
</comment>
<comment type="interaction">
    <interactant intactId="EBI-21893959">
        <id>Q86TM3</id>
    </interactant>
    <interactant intactId="EBI-10316543">
        <id>Q9NXZ2</id>
        <label>DDX43</label>
    </interactant>
    <organismsDiffer>false</organismsDiffer>
    <experiments>2</experiments>
</comment>
<comment type="subcellular location">
    <subcellularLocation>
        <location evidence="4">Nucleus</location>
    </subcellularLocation>
</comment>
<comment type="tissue specificity">
    <text evidence="4">Expressed in testis. Wide expression in various cancer tissues and cancer cell lines.</text>
</comment>
<comment type="similarity">
    <text evidence="6">Belongs to the DEAD box helicase family.</text>
</comment>
<keyword id="KW-0002">3D-structure</keyword>
<keyword id="KW-0067">ATP-binding</keyword>
<keyword id="KW-0347">Helicase</keyword>
<keyword id="KW-0378">Hydrolase</keyword>
<keyword id="KW-0547">Nucleotide-binding</keyword>
<keyword id="KW-0539">Nucleus</keyword>
<keyword id="KW-1267">Proteomics identification</keyword>
<keyword id="KW-1185">Reference proteome</keyword>
<keyword id="KW-0694">RNA-binding</keyword>
<organism>
    <name type="scientific">Homo sapiens</name>
    <name type="common">Human</name>
    <dbReference type="NCBI Taxonomy" id="9606"/>
    <lineage>
        <taxon>Eukaryota</taxon>
        <taxon>Metazoa</taxon>
        <taxon>Chordata</taxon>
        <taxon>Craniata</taxon>
        <taxon>Vertebrata</taxon>
        <taxon>Euteleostomi</taxon>
        <taxon>Mammalia</taxon>
        <taxon>Eutheria</taxon>
        <taxon>Euarchontoglires</taxon>
        <taxon>Primates</taxon>
        <taxon>Haplorrhini</taxon>
        <taxon>Catarrhini</taxon>
        <taxon>Hominidae</taxon>
        <taxon>Homo</taxon>
    </lineage>
</organism>